<gene>
    <name evidence="1" type="primary">nanK</name>
    <name type="ordered locus">CGSHiEE_02565</name>
</gene>
<proteinExistence type="inferred from homology"/>
<dbReference type="EC" id="2.7.1.60" evidence="1"/>
<dbReference type="EMBL" id="CP000671">
    <property type="protein sequence ID" value="ABQ97958.1"/>
    <property type="molecule type" value="Genomic_DNA"/>
</dbReference>
<dbReference type="SMR" id="A5UB07"/>
<dbReference type="KEGG" id="hip:CGSHiEE_02565"/>
<dbReference type="HOGENOM" id="CLU_036604_0_4_6"/>
<dbReference type="UniPathway" id="UPA00629">
    <property type="reaction ID" value="UER00681"/>
</dbReference>
<dbReference type="GO" id="GO:0005524">
    <property type="term" value="F:ATP binding"/>
    <property type="evidence" value="ECO:0007669"/>
    <property type="project" value="UniProtKB-UniRule"/>
</dbReference>
<dbReference type="GO" id="GO:0009384">
    <property type="term" value="F:N-acylmannosamine kinase activity"/>
    <property type="evidence" value="ECO:0007669"/>
    <property type="project" value="UniProtKB-UniRule"/>
</dbReference>
<dbReference type="GO" id="GO:0008270">
    <property type="term" value="F:zinc ion binding"/>
    <property type="evidence" value="ECO:0007669"/>
    <property type="project" value="UniProtKB-UniRule"/>
</dbReference>
<dbReference type="GO" id="GO:0019262">
    <property type="term" value="P:N-acetylneuraminate catabolic process"/>
    <property type="evidence" value="ECO:0007669"/>
    <property type="project" value="UniProtKB-UniRule"/>
</dbReference>
<dbReference type="CDD" id="cd24069">
    <property type="entry name" value="ASKHA_NBD_ROK_EcNanK-like"/>
    <property type="match status" value="1"/>
</dbReference>
<dbReference type="FunFam" id="3.30.420.40:FF:000063">
    <property type="entry name" value="N-acetylmannosamine kinase"/>
    <property type="match status" value="1"/>
</dbReference>
<dbReference type="Gene3D" id="3.30.420.40">
    <property type="match status" value="2"/>
</dbReference>
<dbReference type="HAMAP" id="MF_01234">
    <property type="entry name" value="ManNAc_kinase"/>
    <property type="match status" value="1"/>
</dbReference>
<dbReference type="InterPro" id="IPR043129">
    <property type="entry name" value="ATPase_NBD"/>
</dbReference>
<dbReference type="InterPro" id="IPR023945">
    <property type="entry name" value="ManNAc_kinase_bac"/>
</dbReference>
<dbReference type="InterPro" id="IPR000600">
    <property type="entry name" value="ROK"/>
</dbReference>
<dbReference type="InterPro" id="IPR049874">
    <property type="entry name" value="ROK_cs"/>
</dbReference>
<dbReference type="NCBIfam" id="NF003461">
    <property type="entry name" value="PRK05082.1"/>
    <property type="match status" value="1"/>
</dbReference>
<dbReference type="PANTHER" id="PTHR18964:SF169">
    <property type="entry name" value="N-ACETYLMANNOSAMINE KINASE"/>
    <property type="match status" value="1"/>
</dbReference>
<dbReference type="PANTHER" id="PTHR18964">
    <property type="entry name" value="ROK (REPRESSOR, ORF, KINASE) FAMILY"/>
    <property type="match status" value="1"/>
</dbReference>
<dbReference type="Pfam" id="PF00480">
    <property type="entry name" value="ROK"/>
    <property type="match status" value="1"/>
</dbReference>
<dbReference type="SUPFAM" id="SSF53067">
    <property type="entry name" value="Actin-like ATPase domain"/>
    <property type="match status" value="1"/>
</dbReference>
<dbReference type="PROSITE" id="PS01125">
    <property type="entry name" value="ROK"/>
    <property type="match status" value="1"/>
</dbReference>
<name>NANK_HAEIE</name>
<protein>
    <recommendedName>
        <fullName evidence="1">N-acetylmannosamine kinase</fullName>
        <ecNumber evidence="1">2.7.1.60</ecNumber>
    </recommendedName>
    <alternativeName>
        <fullName evidence="1">ManNAc kinase</fullName>
    </alternativeName>
    <alternativeName>
        <fullName evidence="1">N-acetyl-D-mannosamine kinase</fullName>
    </alternativeName>
</protein>
<feature type="chain" id="PRO_1000066910" description="N-acetylmannosamine kinase">
    <location>
        <begin position="1"/>
        <end position="300"/>
    </location>
</feature>
<feature type="binding site" evidence="1">
    <location>
        <begin position="5"/>
        <end position="12"/>
    </location>
    <ligand>
        <name>ATP</name>
        <dbReference type="ChEBI" id="CHEBI:30616"/>
    </ligand>
</feature>
<feature type="binding site" evidence="1">
    <location>
        <begin position="132"/>
        <end position="139"/>
    </location>
    <ligand>
        <name>ATP</name>
        <dbReference type="ChEBI" id="CHEBI:30616"/>
    </ligand>
</feature>
<feature type="binding site" evidence="1">
    <location>
        <position position="156"/>
    </location>
    <ligand>
        <name>Zn(2+)</name>
        <dbReference type="ChEBI" id="CHEBI:29105"/>
    </ligand>
</feature>
<feature type="binding site" evidence="1">
    <location>
        <position position="166"/>
    </location>
    <ligand>
        <name>Zn(2+)</name>
        <dbReference type="ChEBI" id="CHEBI:29105"/>
    </ligand>
</feature>
<feature type="binding site" evidence="1">
    <location>
        <position position="168"/>
    </location>
    <ligand>
        <name>Zn(2+)</name>
        <dbReference type="ChEBI" id="CHEBI:29105"/>
    </ligand>
</feature>
<feature type="binding site" evidence="1">
    <location>
        <position position="173"/>
    </location>
    <ligand>
        <name>Zn(2+)</name>
        <dbReference type="ChEBI" id="CHEBI:29105"/>
    </ligand>
</feature>
<accession>A5UB07</accession>
<evidence type="ECO:0000255" key="1">
    <source>
        <dbReference type="HAMAP-Rule" id="MF_01234"/>
    </source>
</evidence>
<sequence length="300" mass="31904">MRCLALDIGGTKIAAAIVKNGEIEQRQQIHTPRENVVEGMHQALGKLLADYEGQFDYVAVASTGIINNGILSALNPKNLGGLAEFPLKASIAKHTDKPIGLLNDAQAATYAEYQLQNSEQVSNFVFITVSTGVGGGIVLNQILQTGSRGIAGHIGHTLADPNGAICGCGRRGCVEAIASGRAIEAVSSQWEDPCDPKEVFERFRKNDEKATALVERSAKAIANLIADLVISLDIQKIAIGGSVGLAEGYLSLVEKYLQDFPSIYCCEIETAKFGQDAGLIGAAYWVKDVLLDKPEGTIYG</sequence>
<organism>
    <name type="scientific">Haemophilus influenzae (strain PittEE)</name>
    <dbReference type="NCBI Taxonomy" id="374930"/>
    <lineage>
        <taxon>Bacteria</taxon>
        <taxon>Pseudomonadati</taxon>
        <taxon>Pseudomonadota</taxon>
        <taxon>Gammaproteobacteria</taxon>
        <taxon>Pasteurellales</taxon>
        <taxon>Pasteurellaceae</taxon>
        <taxon>Haemophilus</taxon>
    </lineage>
</organism>
<keyword id="KW-0067">ATP-binding</keyword>
<keyword id="KW-0119">Carbohydrate metabolism</keyword>
<keyword id="KW-0418">Kinase</keyword>
<keyword id="KW-0479">Metal-binding</keyword>
<keyword id="KW-0547">Nucleotide-binding</keyword>
<keyword id="KW-0808">Transferase</keyword>
<keyword id="KW-0862">Zinc</keyword>
<reference key="1">
    <citation type="journal article" date="2007" name="Genome Biol.">
        <title>Characterization and modeling of the Haemophilus influenzae core and supragenomes based on the complete genomic sequences of Rd and 12 clinical nontypeable strains.</title>
        <authorList>
            <person name="Hogg J.S."/>
            <person name="Hu F.Z."/>
            <person name="Janto B."/>
            <person name="Boissy R."/>
            <person name="Hayes J."/>
            <person name="Keefe R."/>
            <person name="Post J.C."/>
            <person name="Ehrlich G.D."/>
        </authorList>
    </citation>
    <scope>NUCLEOTIDE SEQUENCE [LARGE SCALE GENOMIC DNA]</scope>
    <source>
        <strain>PittEE</strain>
    </source>
</reference>
<comment type="function">
    <text evidence="1">Catalyzes the phosphorylation of N-acetylmannosamine (ManNAc) to ManNAc-6-P.</text>
</comment>
<comment type="catalytic activity">
    <reaction evidence="1">
        <text>an N-acyl-D-mannosamine + ATP = an N-acyl-D-mannosamine 6-phosphate + ADP + H(+)</text>
        <dbReference type="Rhea" id="RHEA:23832"/>
        <dbReference type="ChEBI" id="CHEBI:15378"/>
        <dbReference type="ChEBI" id="CHEBI:16062"/>
        <dbReference type="ChEBI" id="CHEBI:30616"/>
        <dbReference type="ChEBI" id="CHEBI:57666"/>
        <dbReference type="ChEBI" id="CHEBI:456216"/>
        <dbReference type="EC" id="2.7.1.60"/>
    </reaction>
</comment>
<comment type="pathway">
    <text evidence="1">Amino-sugar metabolism; N-acetylneuraminate degradation; D-fructose 6-phosphate from N-acetylneuraminate: step 2/5.</text>
</comment>
<comment type="subunit">
    <text evidence="1">Homodimer.</text>
</comment>
<comment type="similarity">
    <text evidence="1">Belongs to the ROK (NagC/XylR) family. NanK subfamily.</text>
</comment>